<reference key="1">
    <citation type="submission" date="1993-09" db="EMBL/GenBank/DDBJ databases">
        <authorList>
            <person name="Tt Vo L."/>
            <person name="Broughton W.J."/>
            <person name="Krause A."/>
        </authorList>
    </citation>
    <scope>NUCLEOTIDE SEQUENCE [MRNA]</scope>
    <source>
        <strain>cv. Red Caloona</strain>
        <tissue>Root hair</tissue>
    </source>
</reference>
<dbReference type="EC" id="2.3.1.74"/>
<dbReference type="EMBL" id="X74821">
    <property type="protein sequence ID" value="CAA52819.1"/>
    <property type="molecule type" value="mRNA"/>
</dbReference>
<dbReference type="PIR" id="S37098">
    <property type="entry name" value="S37098"/>
</dbReference>
<dbReference type="SMR" id="P51089"/>
<dbReference type="UniPathway" id="UPA00154"/>
<dbReference type="GO" id="GO:0016210">
    <property type="term" value="F:naringenin-chalcone synthase activity"/>
    <property type="evidence" value="ECO:0007669"/>
    <property type="project" value="UniProtKB-EC"/>
</dbReference>
<dbReference type="GO" id="GO:0009813">
    <property type="term" value="P:flavonoid biosynthetic process"/>
    <property type="evidence" value="ECO:0007669"/>
    <property type="project" value="UniProtKB-UniPathway"/>
</dbReference>
<dbReference type="GO" id="GO:0030639">
    <property type="term" value="P:polyketide biosynthetic process"/>
    <property type="evidence" value="ECO:0007669"/>
    <property type="project" value="TreeGrafter"/>
</dbReference>
<dbReference type="CDD" id="cd00831">
    <property type="entry name" value="CHS_like"/>
    <property type="match status" value="1"/>
</dbReference>
<dbReference type="FunFam" id="3.40.47.10:FF:000014">
    <property type="entry name" value="Chalcone synthase 1"/>
    <property type="match status" value="1"/>
</dbReference>
<dbReference type="FunFam" id="3.40.47.10:FF:000025">
    <property type="entry name" value="Chalcone synthase 2"/>
    <property type="match status" value="1"/>
</dbReference>
<dbReference type="Gene3D" id="3.40.47.10">
    <property type="match status" value="2"/>
</dbReference>
<dbReference type="InterPro" id="IPR012328">
    <property type="entry name" value="Chalcone/stilbene_synt_C"/>
</dbReference>
<dbReference type="InterPro" id="IPR001099">
    <property type="entry name" value="Chalcone/stilbene_synt_N"/>
</dbReference>
<dbReference type="InterPro" id="IPR018088">
    <property type="entry name" value="Chalcone/stilbene_synthase_AS"/>
</dbReference>
<dbReference type="InterPro" id="IPR011141">
    <property type="entry name" value="Polyketide_synthase_type-III"/>
</dbReference>
<dbReference type="InterPro" id="IPR016039">
    <property type="entry name" value="Thiolase-like"/>
</dbReference>
<dbReference type="PANTHER" id="PTHR11877:SF62">
    <property type="entry name" value="CHALCONE SYNTHASE 7"/>
    <property type="match status" value="1"/>
</dbReference>
<dbReference type="PANTHER" id="PTHR11877">
    <property type="entry name" value="HYDROXYMETHYLGLUTARYL-COA SYNTHASE"/>
    <property type="match status" value="1"/>
</dbReference>
<dbReference type="Pfam" id="PF02797">
    <property type="entry name" value="Chal_sti_synt_C"/>
    <property type="match status" value="1"/>
</dbReference>
<dbReference type="Pfam" id="PF00195">
    <property type="entry name" value="Chal_sti_synt_N"/>
    <property type="match status" value="1"/>
</dbReference>
<dbReference type="PIRSF" id="PIRSF000451">
    <property type="entry name" value="PKS_III"/>
    <property type="match status" value="1"/>
</dbReference>
<dbReference type="SUPFAM" id="SSF53901">
    <property type="entry name" value="Thiolase-like"/>
    <property type="match status" value="2"/>
</dbReference>
<dbReference type="PROSITE" id="PS00441">
    <property type="entry name" value="CHALCONE_SYNTH"/>
    <property type="match status" value="1"/>
</dbReference>
<name>CHSY_VIGUN</name>
<keyword id="KW-0012">Acyltransferase</keyword>
<keyword id="KW-0284">Flavonoid biosynthesis</keyword>
<keyword id="KW-0808">Transferase</keyword>
<gene>
    <name type="primary">CHS</name>
</gene>
<feature type="chain" id="PRO_0000216074" description="Chalcone synthase">
    <location>
        <begin position="1"/>
        <end position="388"/>
    </location>
</feature>
<feature type="active site" evidence="1">
    <location>
        <position position="164"/>
    </location>
</feature>
<protein>
    <recommendedName>
        <fullName>Chalcone synthase</fullName>
        <ecNumber>2.3.1.74</ecNumber>
    </recommendedName>
    <alternativeName>
        <fullName>Naringenin-chalcone synthase</fullName>
    </alternativeName>
</protein>
<comment type="function">
    <text>The primary product of this enzyme is 4,2',4',6'-tetrahydroxychalcone (also termed naringenin-chalcone or chalcone) which can under specific conditions spontaneously isomerize into naringenin.</text>
</comment>
<comment type="catalytic activity">
    <reaction evidence="1">
        <text>(E)-4-coumaroyl-CoA + 3 malonyl-CoA + 3 H(+) = 2',4,4',6'-tetrahydroxychalcone + 3 CO2 + 4 CoA</text>
        <dbReference type="Rhea" id="RHEA:11128"/>
        <dbReference type="ChEBI" id="CHEBI:15378"/>
        <dbReference type="ChEBI" id="CHEBI:15413"/>
        <dbReference type="ChEBI" id="CHEBI:16526"/>
        <dbReference type="ChEBI" id="CHEBI:57287"/>
        <dbReference type="ChEBI" id="CHEBI:57384"/>
        <dbReference type="ChEBI" id="CHEBI:85008"/>
        <dbReference type="EC" id="2.3.1.74"/>
    </reaction>
</comment>
<comment type="pathway">
    <text>Secondary metabolite biosynthesis; flavonoid biosynthesis.</text>
</comment>
<comment type="similarity">
    <text evidence="2">Belongs to the thiolase-like superfamily. Chalcone/stilbene synthases family.</text>
</comment>
<evidence type="ECO:0000255" key="1">
    <source>
        <dbReference type="PROSITE-ProRule" id="PRU10023"/>
    </source>
</evidence>
<evidence type="ECO:0000305" key="2"/>
<proteinExistence type="evidence at transcript level"/>
<organism>
    <name type="scientific">Vigna unguiculata</name>
    <name type="common">Cowpea</name>
    <dbReference type="NCBI Taxonomy" id="3917"/>
    <lineage>
        <taxon>Eukaryota</taxon>
        <taxon>Viridiplantae</taxon>
        <taxon>Streptophyta</taxon>
        <taxon>Embryophyta</taxon>
        <taxon>Tracheophyta</taxon>
        <taxon>Spermatophyta</taxon>
        <taxon>Magnoliopsida</taxon>
        <taxon>eudicotyledons</taxon>
        <taxon>Gunneridae</taxon>
        <taxon>Pentapetalae</taxon>
        <taxon>rosids</taxon>
        <taxon>fabids</taxon>
        <taxon>Fabales</taxon>
        <taxon>Fabaceae</taxon>
        <taxon>Papilionoideae</taxon>
        <taxon>50 kb inversion clade</taxon>
        <taxon>NPAAA clade</taxon>
        <taxon>indigoferoid/millettioid clade</taxon>
        <taxon>Phaseoleae</taxon>
        <taxon>Vigna</taxon>
    </lineage>
</organism>
<accession>P51089</accession>
<sequence length="388" mass="42433">MVSVSEIRQAQRAEGPATILAIGTATPPNCVDQSTYPDYYFRITNSEHMTDLKEKFQRMCDKSMIKKRYMHVTEEILKENPSMCAYMAPSLDARQDIVVVEVPRLGKEAAVKAIKEWGQPKSKITHLIFCTTSGVDMPGADYQLTKLLGLRPYVKRYMMYQQGCFAGGTVLRLAKDLAENNKGARVLVVCSEITAVTFRGPSDTHLDSLVGQALFGDGAAAVIVGSDPIPQIEKPLFELVWTAQTIAPDSEGAIDGHLREVGLTFHLLKDVPGIVSKNIGKALSEAFDPLNISDYNSIFWIAHPGGPAILDQVAQKLGLKPEKMKATRDVLSDYGNMSSACVTFHLDEIEKSVENGLKTTGKDLEWGVLFGFGPGLSLETVVLHSVAI</sequence>